<comment type="function">
    <text evidence="1">Acetylxylan esterase involved in the hydrolysis of xylan, a major structural heterogeneous polysaccharide found in plant biomass representing the second most abundant polysaccharide in the biosphere, after cellulose. Degrades acetylated xylans by cleaving acetyl side groups from the hetero-xylan backbone (By similarity).</text>
</comment>
<comment type="catalytic activity">
    <reaction>
        <text>Deacetylation of xylans and xylo-oligosaccharides.</text>
        <dbReference type="EC" id="3.1.1.72"/>
    </reaction>
</comment>
<comment type="pathway">
    <text>Glycan degradation; xylan degradation.</text>
</comment>
<comment type="subunit">
    <text evidence="1">Monomer.</text>
</comment>
<comment type="subcellular location">
    <subcellularLocation>
        <location evidence="1">Secreted</location>
    </subcellularLocation>
</comment>
<comment type="similarity">
    <text evidence="3">Belongs to the carbohydrate esterase 1 (CE1) family. AxeA subfamily.</text>
</comment>
<comment type="caution">
    <text evidence="3">The C-terminal carbohydrate-binding module (CBM) extension found in some acetylxylan esterases from other species is absent.</text>
</comment>
<evidence type="ECO:0000250" key="1"/>
<evidence type="ECO:0000255" key="2"/>
<evidence type="ECO:0000305" key="3"/>
<dbReference type="EC" id="3.1.1.72"/>
<dbReference type="EMBL" id="CH476608">
    <property type="protein sequence ID" value="EAU30034.1"/>
    <property type="molecule type" value="Genomic_DNA"/>
</dbReference>
<dbReference type="RefSeq" id="XP_001218465.1">
    <property type="nucleotide sequence ID" value="XM_001218464.1"/>
</dbReference>
<dbReference type="SMR" id="Q0C8Z1"/>
<dbReference type="STRING" id="341663.Q0C8Z1"/>
<dbReference type="ESTHER" id="asptn-axe1">
    <property type="family name" value="Esterase_phb"/>
</dbReference>
<dbReference type="GlyCosmos" id="Q0C8Z1">
    <property type="glycosylation" value="2 sites, No reported glycans"/>
</dbReference>
<dbReference type="EnsemblFungi" id="EAU30034">
    <property type="protein sequence ID" value="EAU30034"/>
    <property type="gene ID" value="ATEG_09843"/>
</dbReference>
<dbReference type="GeneID" id="4354490"/>
<dbReference type="VEuPathDB" id="FungiDB:ATEG_09843"/>
<dbReference type="eggNOG" id="ENOG502QTDU">
    <property type="taxonomic scope" value="Eukaryota"/>
</dbReference>
<dbReference type="HOGENOM" id="CLU_027551_1_1_1"/>
<dbReference type="OMA" id="WGPNLQG"/>
<dbReference type="OrthoDB" id="2425929at2759"/>
<dbReference type="UniPathway" id="UPA00114"/>
<dbReference type="Proteomes" id="UP000007963">
    <property type="component" value="Unassembled WGS sequence"/>
</dbReference>
<dbReference type="GO" id="GO:0005576">
    <property type="term" value="C:extracellular region"/>
    <property type="evidence" value="ECO:0007669"/>
    <property type="project" value="UniProtKB-SubCell"/>
</dbReference>
<dbReference type="GO" id="GO:0046555">
    <property type="term" value="F:acetylxylan esterase activity"/>
    <property type="evidence" value="ECO:0007669"/>
    <property type="project" value="UniProtKB-EC"/>
</dbReference>
<dbReference type="GO" id="GO:0030245">
    <property type="term" value="P:cellulose catabolic process"/>
    <property type="evidence" value="ECO:0007669"/>
    <property type="project" value="UniProtKB-KW"/>
</dbReference>
<dbReference type="GO" id="GO:0045493">
    <property type="term" value="P:xylan catabolic process"/>
    <property type="evidence" value="ECO:0007669"/>
    <property type="project" value="UniProtKB-UniPathway"/>
</dbReference>
<dbReference type="Gene3D" id="3.40.50.1820">
    <property type="entry name" value="alpha/beta hydrolase"/>
    <property type="match status" value="1"/>
</dbReference>
<dbReference type="InterPro" id="IPR029058">
    <property type="entry name" value="AB_hydrolase_fold"/>
</dbReference>
<dbReference type="InterPro" id="IPR010126">
    <property type="entry name" value="Esterase_phb"/>
</dbReference>
<dbReference type="InterPro" id="IPR050955">
    <property type="entry name" value="Plant_Biomass_Hydrol_Est"/>
</dbReference>
<dbReference type="NCBIfam" id="TIGR01840">
    <property type="entry name" value="esterase_phb"/>
    <property type="match status" value="1"/>
</dbReference>
<dbReference type="PANTHER" id="PTHR43037:SF3">
    <property type="entry name" value="FERULOYL ESTERASE B"/>
    <property type="match status" value="1"/>
</dbReference>
<dbReference type="PANTHER" id="PTHR43037">
    <property type="entry name" value="UNNAMED PRODUCT-RELATED"/>
    <property type="match status" value="1"/>
</dbReference>
<dbReference type="Pfam" id="PF10503">
    <property type="entry name" value="Esterase_PHB"/>
    <property type="match status" value="1"/>
</dbReference>
<dbReference type="SUPFAM" id="SSF53474">
    <property type="entry name" value="alpha/beta-Hydrolases"/>
    <property type="match status" value="2"/>
</dbReference>
<name>AXE1_ASPTN</name>
<organism>
    <name type="scientific">Aspergillus terreus (strain NIH 2624 / FGSC A1156)</name>
    <dbReference type="NCBI Taxonomy" id="341663"/>
    <lineage>
        <taxon>Eukaryota</taxon>
        <taxon>Fungi</taxon>
        <taxon>Dikarya</taxon>
        <taxon>Ascomycota</taxon>
        <taxon>Pezizomycotina</taxon>
        <taxon>Eurotiomycetes</taxon>
        <taxon>Eurotiomycetidae</taxon>
        <taxon>Eurotiales</taxon>
        <taxon>Aspergillaceae</taxon>
        <taxon>Aspergillus</taxon>
        <taxon>Aspergillus subgen. Circumdati</taxon>
    </lineage>
</organism>
<proteinExistence type="inferred from homology"/>
<accession>Q0C8Z1</accession>
<protein>
    <recommendedName>
        <fullName>Probable acetylxylan esterase A</fullName>
        <ecNumber>3.1.1.72</ecNumber>
    </recommendedName>
</protein>
<reference key="1">
    <citation type="submission" date="2005-09" db="EMBL/GenBank/DDBJ databases">
        <title>Annotation of the Aspergillus terreus NIH2624 genome.</title>
        <authorList>
            <person name="Birren B.W."/>
            <person name="Lander E.S."/>
            <person name="Galagan J.E."/>
            <person name="Nusbaum C."/>
            <person name="Devon K."/>
            <person name="Henn M."/>
            <person name="Ma L.-J."/>
            <person name="Jaffe D.B."/>
            <person name="Butler J."/>
            <person name="Alvarez P."/>
            <person name="Gnerre S."/>
            <person name="Grabherr M."/>
            <person name="Kleber M."/>
            <person name="Mauceli E.W."/>
            <person name="Brockman W."/>
            <person name="Rounsley S."/>
            <person name="Young S.K."/>
            <person name="LaButti K."/>
            <person name="Pushparaj V."/>
            <person name="DeCaprio D."/>
            <person name="Crawford M."/>
            <person name="Koehrsen M."/>
            <person name="Engels R."/>
            <person name="Montgomery P."/>
            <person name="Pearson M."/>
            <person name="Howarth C."/>
            <person name="Larson L."/>
            <person name="Luoma S."/>
            <person name="White J."/>
            <person name="Alvarado L."/>
            <person name="Kodira C.D."/>
            <person name="Zeng Q."/>
            <person name="Oleary S."/>
            <person name="Yandava C."/>
            <person name="Denning D.W."/>
            <person name="Nierman W.C."/>
            <person name="Milne T."/>
            <person name="Madden K."/>
        </authorList>
    </citation>
    <scope>NUCLEOTIDE SEQUENCE [LARGE SCALE GENOMIC DNA]</scope>
    <source>
        <strain>NIH 2624 / FGSC A1156</strain>
    </source>
</reference>
<feature type="signal peptide" evidence="2">
    <location>
        <begin position="1"/>
        <end position="19"/>
    </location>
</feature>
<feature type="chain" id="PRO_0000393481" description="Probable acetylxylan esterase A">
    <location>
        <begin position="20"/>
        <end position="311"/>
    </location>
</feature>
<feature type="active site" description="Charge relay system" evidence="1">
    <location>
        <position position="153"/>
    </location>
</feature>
<feature type="glycosylation site" description="N-linked (GlcNAc...) asparagine" evidence="2">
    <location>
        <position position="197"/>
    </location>
</feature>
<feature type="glycosylation site" description="N-linked (GlcNAc...) asparagine" evidence="2">
    <location>
        <position position="224"/>
    </location>
</feature>
<sequence>MAPFSFILTVLLYALTCSARALGHAHALLPRAGSLEQVTDFGDNPTNVGMYIYVPNNLASSPGIVVAIHYSPEGTGTAEAYYTGSPYAQLAEQYGFIVIYPQSPYEGTCWDVSSQETLTHNGGGNSNSIANMVTWAISKYNADSSKVFVTGSSSGAMMTHQNVMAATYPELFAAATVYSGVPAGCFYSSSNQQDGWNSTCAQGQVITTPENWANVAKGMYPGYNGTRPKMQIYHGSVDTTLLPQNYYETCKQWAGVFGYNYDSPQQVQDNTPQSNYATTTWGDDLQGIFATGVGHTVPIRGDDDMAWFGFA</sequence>
<keyword id="KW-0119">Carbohydrate metabolism</keyword>
<keyword id="KW-0136">Cellulose degradation</keyword>
<keyword id="KW-0325">Glycoprotein</keyword>
<keyword id="KW-0378">Hydrolase</keyword>
<keyword id="KW-0624">Polysaccharide degradation</keyword>
<keyword id="KW-1185">Reference proteome</keyword>
<keyword id="KW-0964">Secreted</keyword>
<keyword id="KW-0719">Serine esterase</keyword>
<keyword id="KW-0732">Signal</keyword>
<gene>
    <name type="primary">axeA</name>
    <name type="synonym">aceA</name>
    <name type="ORF">ATEG_09843</name>
</gene>